<feature type="chain" id="PRO_1000011623" description="GTPase Der">
    <location>
        <begin position="1"/>
        <end position="465"/>
    </location>
</feature>
<feature type="domain" description="EngA-type G 1">
    <location>
        <begin position="3"/>
        <end position="166"/>
    </location>
</feature>
<feature type="domain" description="EngA-type G 2">
    <location>
        <begin position="184"/>
        <end position="358"/>
    </location>
</feature>
<feature type="domain" description="KH-like" evidence="1">
    <location>
        <begin position="359"/>
        <end position="443"/>
    </location>
</feature>
<feature type="region of interest" description="Disordered" evidence="2">
    <location>
        <begin position="446"/>
        <end position="465"/>
    </location>
</feature>
<feature type="binding site" evidence="1">
    <location>
        <begin position="9"/>
        <end position="16"/>
    </location>
    <ligand>
        <name>GTP</name>
        <dbReference type="ChEBI" id="CHEBI:37565"/>
        <label>1</label>
    </ligand>
</feature>
<feature type="binding site" evidence="1">
    <location>
        <begin position="56"/>
        <end position="60"/>
    </location>
    <ligand>
        <name>GTP</name>
        <dbReference type="ChEBI" id="CHEBI:37565"/>
        <label>1</label>
    </ligand>
</feature>
<feature type="binding site" evidence="1">
    <location>
        <begin position="118"/>
        <end position="121"/>
    </location>
    <ligand>
        <name>GTP</name>
        <dbReference type="ChEBI" id="CHEBI:37565"/>
        <label>1</label>
    </ligand>
</feature>
<feature type="binding site" evidence="1">
    <location>
        <begin position="190"/>
        <end position="197"/>
    </location>
    <ligand>
        <name>GTP</name>
        <dbReference type="ChEBI" id="CHEBI:37565"/>
        <label>2</label>
    </ligand>
</feature>
<feature type="binding site" evidence="1">
    <location>
        <begin position="237"/>
        <end position="241"/>
    </location>
    <ligand>
        <name>GTP</name>
        <dbReference type="ChEBI" id="CHEBI:37565"/>
        <label>2</label>
    </ligand>
</feature>
<feature type="binding site" evidence="1">
    <location>
        <begin position="302"/>
        <end position="305"/>
    </location>
    <ligand>
        <name>GTP</name>
        <dbReference type="ChEBI" id="CHEBI:37565"/>
        <label>2</label>
    </ligand>
</feature>
<organism>
    <name type="scientific">Francisella tularensis subsp. tularensis (strain FSC 198)</name>
    <dbReference type="NCBI Taxonomy" id="393115"/>
    <lineage>
        <taxon>Bacteria</taxon>
        <taxon>Pseudomonadati</taxon>
        <taxon>Pseudomonadota</taxon>
        <taxon>Gammaproteobacteria</taxon>
        <taxon>Thiotrichales</taxon>
        <taxon>Francisellaceae</taxon>
        <taxon>Francisella</taxon>
    </lineage>
</organism>
<accession>Q14GT5</accession>
<keyword id="KW-0342">GTP-binding</keyword>
<keyword id="KW-0547">Nucleotide-binding</keyword>
<keyword id="KW-0677">Repeat</keyword>
<keyword id="KW-0690">Ribosome biogenesis</keyword>
<evidence type="ECO:0000255" key="1">
    <source>
        <dbReference type="HAMAP-Rule" id="MF_00195"/>
    </source>
</evidence>
<evidence type="ECO:0000256" key="2">
    <source>
        <dbReference type="SAM" id="MobiDB-lite"/>
    </source>
</evidence>
<protein>
    <recommendedName>
        <fullName evidence="1">GTPase Der</fullName>
    </recommendedName>
    <alternativeName>
        <fullName evidence="1">GTP-binding protein EngA</fullName>
    </alternativeName>
</protein>
<sequence length="465" mass="52446">MSFLVAIVGRANVGKSTLFNVLTNSYDALVFDFEGVTRDRQYGQAKYDDLDYLVVDTGGISDKDVGFDEFMAKQSQIAIDEANLVFFVVDGRSGLTTGDEYVASLLRQKDKKVVVVVNKVDGTDEEAAMAEFYSFGFDKVFAISAAHRRNTQKLVDKFLKKTLNEYYQDYTQTQEHKEQQRHGIHFSLIGRPNVGKSTLTNRMLGEDRVVVFDMPGTTIDSVSIPFERHGQKYTIVDTAGVRKRGKVKQTLEKFSVIKTLQAIQDSNVVVAVVDARQGISDQDLSLIHFAIKNGRALVLAVNKWDGMTEEDRIQVKQDLKRKLFFLQDYVDIHFISALHGTNVGHVFESIDTAYACASKKITTADATRLMQLAVEAHSPPMVGKFRIKLKYAHVGGHNPPVIVIHGNQVSRLPNSYKRYLENFFREALDFRGTPIVFEFKQSENPFADRKNKRSKDEGSKSKKVK</sequence>
<dbReference type="EMBL" id="AM286280">
    <property type="protein sequence ID" value="CAL09322.1"/>
    <property type="molecule type" value="Genomic_DNA"/>
</dbReference>
<dbReference type="RefSeq" id="WP_003022025.1">
    <property type="nucleotide sequence ID" value="NC_008245.1"/>
</dbReference>
<dbReference type="SMR" id="Q14GT5"/>
<dbReference type="KEGG" id="ftf:FTF1306c"/>
<dbReference type="HOGENOM" id="CLU_016077_6_2_6"/>
<dbReference type="GO" id="GO:0005525">
    <property type="term" value="F:GTP binding"/>
    <property type="evidence" value="ECO:0007669"/>
    <property type="project" value="UniProtKB-UniRule"/>
</dbReference>
<dbReference type="GO" id="GO:0043022">
    <property type="term" value="F:ribosome binding"/>
    <property type="evidence" value="ECO:0007669"/>
    <property type="project" value="TreeGrafter"/>
</dbReference>
<dbReference type="GO" id="GO:0042254">
    <property type="term" value="P:ribosome biogenesis"/>
    <property type="evidence" value="ECO:0007669"/>
    <property type="project" value="UniProtKB-KW"/>
</dbReference>
<dbReference type="CDD" id="cd01894">
    <property type="entry name" value="EngA1"/>
    <property type="match status" value="1"/>
</dbReference>
<dbReference type="CDD" id="cd01895">
    <property type="entry name" value="EngA2"/>
    <property type="match status" value="1"/>
</dbReference>
<dbReference type="FunFam" id="3.30.300.20:FF:000004">
    <property type="entry name" value="GTPase Der"/>
    <property type="match status" value="1"/>
</dbReference>
<dbReference type="FunFam" id="3.40.50.300:FF:000040">
    <property type="entry name" value="GTPase Der"/>
    <property type="match status" value="1"/>
</dbReference>
<dbReference type="FunFam" id="3.40.50.300:FF:000057">
    <property type="entry name" value="GTPase Der"/>
    <property type="match status" value="1"/>
</dbReference>
<dbReference type="Gene3D" id="3.30.300.20">
    <property type="match status" value="1"/>
</dbReference>
<dbReference type="Gene3D" id="3.40.50.300">
    <property type="entry name" value="P-loop containing nucleotide triphosphate hydrolases"/>
    <property type="match status" value="2"/>
</dbReference>
<dbReference type="HAMAP" id="MF_00195">
    <property type="entry name" value="GTPase_Der"/>
    <property type="match status" value="1"/>
</dbReference>
<dbReference type="InterPro" id="IPR031166">
    <property type="entry name" value="G_ENGA"/>
</dbReference>
<dbReference type="InterPro" id="IPR006073">
    <property type="entry name" value="GTP-bd"/>
</dbReference>
<dbReference type="InterPro" id="IPR016484">
    <property type="entry name" value="GTPase_Der"/>
</dbReference>
<dbReference type="InterPro" id="IPR032859">
    <property type="entry name" value="KH_dom-like"/>
</dbReference>
<dbReference type="InterPro" id="IPR015946">
    <property type="entry name" value="KH_dom-like_a/b"/>
</dbReference>
<dbReference type="InterPro" id="IPR027417">
    <property type="entry name" value="P-loop_NTPase"/>
</dbReference>
<dbReference type="InterPro" id="IPR005225">
    <property type="entry name" value="Small_GTP-bd"/>
</dbReference>
<dbReference type="NCBIfam" id="TIGR03594">
    <property type="entry name" value="GTPase_EngA"/>
    <property type="match status" value="1"/>
</dbReference>
<dbReference type="NCBIfam" id="TIGR00231">
    <property type="entry name" value="small_GTP"/>
    <property type="match status" value="2"/>
</dbReference>
<dbReference type="PANTHER" id="PTHR43834">
    <property type="entry name" value="GTPASE DER"/>
    <property type="match status" value="1"/>
</dbReference>
<dbReference type="PANTHER" id="PTHR43834:SF6">
    <property type="entry name" value="GTPASE DER"/>
    <property type="match status" value="1"/>
</dbReference>
<dbReference type="Pfam" id="PF14714">
    <property type="entry name" value="KH_dom-like"/>
    <property type="match status" value="1"/>
</dbReference>
<dbReference type="Pfam" id="PF01926">
    <property type="entry name" value="MMR_HSR1"/>
    <property type="match status" value="2"/>
</dbReference>
<dbReference type="PIRSF" id="PIRSF006485">
    <property type="entry name" value="GTP-binding_EngA"/>
    <property type="match status" value="1"/>
</dbReference>
<dbReference type="PRINTS" id="PR00326">
    <property type="entry name" value="GTP1OBG"/>
</dbReference>
<dbReference type="SUPFAM" id="SSF52540">
    <property type="entry name" value="P-loop containing nucleoside triphosphate hydrolases"/>
    <property type="match status" value="2"/>
</dbReference>
<dbReference type="PROSITE" id="PS51712">
    <property type="entry name" value="G_ENGA"/>
    <property type="match status" value="2"/>
</dbReference>
<reference key="1">
    <citation type="journal article" date="2007" name="PLoS ONE">
        <title>Genome sequencing shows that European isolates of Francisella tularensis subspecies tularensis are almost identical to US laboratory strain Schu S4.</title>
        <authorList>
            <person name="Chaudhuri R.R."/>
            <person name="Ren C.-P."/>
            <person name="Desmond L."/>
            <person name="Vincent G.A."/>
            <person name="Silman N.J."/>
            <person name="Brehm J.K."/>
            <person name="Elmore M.J."/>
            <person name="Hudson M.J."/>
            <person name="Forsman M."/>
            <person name="Isherwood K.E."/>
            <person name="Gurycova D."/>
            <person name="Minton N.P."/>
            <person name="Titball R.W."/>
            <person name="Pallen M.J."/>
            <person name="Vipond R."/>
        </authorList>
    </citation>
    <scope>NUCLEOTIDE SEQUENCE [LARGE SCALE GENOMIC DNA]</scope>
    <source>
        <strain>FSC 198</strain>
    </source>
</reference>
<proteinExistence type="inferred from homology"/>
<comment type="function">
    <text evidence="1">GTPase that plays an essential role in the late steps of ribosome biogenesis.</text>
</comment>
<comment type="subunit">
    <text evidence="1">Associates with the 50S ribosomal subunit.</text>
</comment>
<comment type="similarity">
    <text evidence="1">Belongs to the TRAFAC class TrmE-Era-EngA-EngB-Septin-like GTPase superfamily. EngA (Der) GTPase family.</text>
</comment>
<gene>
    <name evidence="1" type="primary">der</name>
    <name type="synonym">engA</name>
    <name type="ordered locus">FTF1306c</name>
</gene>
<name>DER_FRAT1</name>